<comment type="function">
    <text evidence="1">Activates KDO (a required 8-carbon sugar) for incorporation into bacterial lipopolysaccharide in Gram-negative bacteria.</text>
</comment>
<comment type="catalytic activity">
    <reaction evidence="1">
        <text>3-deoxy-alpha-D-manno-oct-2-ulosonate + CTP = CMP-3-deoxy-beta-D-manno-octulosonate + diphosphate</text>
        <dbReference type="Rhea" id="RHEA:23448"/>
        <dbReference type="ChEBI" id="CHEBI:33019"/>
        <dbReference type="ChEBI" id="CHEBI:37563"/>
        <dbReference type="ChEBI" id="CHEBI:85986"/>
        <dbReference type="ChEBI" id="CHEBI:85987"/>
        <dbReference type="EC" id="2.7.7.38"/>
    </reaction>
</comment>
<comment type="pathway">
    <text evidence="1">Nucleotide-sugar biosynthesis; CMP-3-deoxy-D-manno-octulosonate biosynthesis; CMP-3-deoxy-D-manno-octulosonate from 3-deoxy-D-manno-octulosonate and CTP: step 1/1.</text>
</comment>
<comment type="pathway">
    <text evidence="1">Bacterial outer membrane biogenesis; lipopolysaccharide biosynthesis.</text>
</comment>
<comment type="subcellular location">
    <subcellularLocation>
        <location evidence="1">Cytoplasm</location>
    </subcellularLocation>
</comment>
<comment type="similarity">
    <text evidence="1">Belongs to the KdsB family.</text>
</comment>
<keyword id="KW-0963">Cytoplasm</keyword>
<keyword id="KW-0448">Lipopolysaccharide biosynthesis</keyword>
<keyword id="KW-0548">Nucleotidyltransferase</keyword>
<keyword id="KW-0808">Transferase</keyword>
<evidence type="ECO:0000255" key="1">
    <source>
        <dbReference type="HAMAP-Rule" id="MF_00057"/>
    </source>
</evidence>
<accession>A7FJV8</accession>
<dbReference type="EC" id="2.7.7.38" evidence="1"/>
<dbReference type="EMBL" id="CP000720">
    <property type="protein sequence ID" value="ABS48884.1"/>
    <property type="molecule type" value="Genomic_DNA"/>
</dbReference>
<dbReference type="RefSeq" id="WP_002211314.1">
    <property type="nucleotide sequence ID" value="NC_009708.1"/>
</dbReference>
<dbReference type="SMR" id="A7FJV8"/>
<dbReference type="GeneID" id="57977196"/>
<dbReference type="KEGG" id="ypi:YpsIP31758_2571"/>
<dbReference type="HOGENOM" id="CLU_065038_1_0_6"/>
<dbReference type="UniPathway" id="UPA00030"/>
<dbReference type="UniPathway" id="UPA00358">
    <property type="reaction ID" value="UER00476"/>
</dbReference>
<dbReference type="Proteomes" id="UP000002412">
    <property type="component" value="Chromosome"/>
</dbReference>
<dbReference type="GO" id="GO:0005829">
    <property type="term" value="C:cytosol"/>
    <property type="evidence" value="ECO:0007669"/>
    <property type="project" value="TreeGrafter"/>
</dbReference>
<dbReference type="GO" id="GO:0008690">
    <property type="term" value="F:3-deoxy-manno-octulosonate cytidylyltransferase activity"/>
    <property type="evidence" value="ECO:0007669"/>
    <property type="project" value="UniProtKB-UniRule"/>
</dbReference>
<dbReference type="GO" id="GO:0033468">
    <property type="term" value="P:CMP-keto-3-deoxy-D-manno-octulosonic acid biosynthetic process"/>
    <property type="evidence" value="ECO:0007669"/>
    <property type="project" value="UniProtKB-UniRule"/>
</dbReference>
<dbReference type="GO" id="GO:0009103">
    <property type="term" value="P:lipopolysaccharide biosynthetic process"/>
    <property type="evidence" value="ECO:0007669"/>
    <property type="project" value="UniProtKB-UniRule"/>
</dbReference>
<dbReference type="CDD" id="cd02517">
    <property type="entry name" value="CMP-KDO-Synthetase"/>
    <property type="match status" value="1"/>
</dbReference>
<dbReference type="FunFam" id="3.90.550.10:FF:000011">
    <property type="entry name" value="3-deoxy-manno-octulosonate cytidylyltransferase"/>
    <property type="match status" value="1"/>
</dbReference>
<dbReference type="Gene3D" id="3.90.550.10">
    <property type="entry name" value="Spore Coat Polysaccharide Biosynthesis Protein SpsA, Chain A"/>
    <property type="match status" value="1"/>
</dbReference>
<dbReference type="HAMAP" id="MF_00057">
    <property type="entry name" value="KdsB"/>
    <property type="match status" value="1"/>
</dbReference>
<dbReference type="InterPro" id="IPR003329">
    <property type="entry name" value="Cytidylyl_trans"/>
</dbReference>
<dbReference type="InterPro" id="IPR004528">
    <property type="entry name" value="KdsB"/>
</dbReference>
<dbReference type="InterPro" id="IPR029044">
    <property type="entry name" value="Nucleotide-diphossugar_trans"/>
</dbReference>
<dbReference type="NCBIfam" id="TIGR00466">
    <property type="entry name" value="kdsB"/>
    <property type="match status" value="1"/>
</dbReference>
<dbReference type="NCBIfam" id="NF003950">
    <property type="entry name" value="PRK05450.1-3"/>
    <property type="match status" value="1"/>
</dbReference>
<dbReference type="NCBIfam" id="NF003952">
    <property type="entry name" value="PRK05450.1-5"/>
    <property type="match status" value="1"/>
</dbReference>
<dbReference type="NCBIfam" id="NF009905">
    <property type="entry name" value="PRK13368.1"/>
    <property type="match status" value="1"/>
</dbReference>
<dbReference type="PANTHER" id="PTHR42866">
    <property type="entry name" value="3-DEOXY-MANNO-OCTULOSONATE CYTIDYLYLTRANSFERASE"/>
    <property type="match status" value="1"/>
</dbReference>
<dbReference type="PANTHER" id="PTHR42866:SF2">
    <property type="entry name" value="3-DEOXY-MANNO-OCTULOSONATE CYTIDYLYLTRANSFERASE, MITOCHONDRIAL"/>
    <property type="match status" value="1"/>
</dbReference>
<dbReference type="Pfam" id="PF02348">
    <property type="entry name" value="CTP_transf_3"/>
    <property type="match status" value="1"/>
</dbReference>
<dbReference type="SUPFAM" id="SSF53448">
    <property type="entry name" value="Nucleotide-diphospho-sugar transferases"/>
    <property type="match status" value="1"/>
</dbReference>
<proteinExistence type="inferred from homology"/>
<protein>
    <recommendedName>
        <fullName evidence="1">3-deoxy-manno-octulosonate cytidylyltransferase</fullName>
        <ecNumber evidence="1">2.7.7.38</ecNumber>
    </recommendedName>
    <alternativeName>
        <fullName evidence="1">CMP-2-keto-3-deoxyoctulosonic acid synthase</fullName>
        <shortName evidence="1">CKS</shortName>
        <shortName evidence="1">CMP-KDO synthase</shortName>
    </alternativeName>
</protein>
<name>KDSB_YERP3</name>
<sequence>MSFIAIIPARYASTRLPGKPLADIAGKPMVVHVMERALASGADRVIVATDHPDVVKAVEAAGGEVCLTRADHQSGTERLAEVIEHYGFADDDIIVNVQGDEPLVPPVIIRQVADNLAACSAGMATLAVPIASSEEAFNPNAVKVVMDAQGYALYFSRATIPWERERFAQSKETIGDCFLRHIGIYAYRAGFIRRYVNWAPSQLEQIELLEQLRVLWYGEKIHVAVAKAVPAVGVDTQSDLDRVRAIMLNQ</sequence>
<gene>
    <name evidence="1" type="primary">kdsB</name>
    <name type="ordered locus">YpsIP31758_2571</name>
</gene>
<organism>
    <name type="scientific">Yersinia pseudotuberculosis serotype O:1b (strain IP 31758)</name>
    <dbReference type="NCBI Taxonomy" id="349747"/>
    <lineage>
        <taxon>Bacteria</taxon>
        <taxon>Pseudomonadati</taxon>
        <taxon>Pseudomonadota</taxon>
        <taxon>Gammaproteobacteria</taxon>
        <taxon>Enterobacterales</taxon>
        <taxon>Yersiniaceae</taxon>
        <taxon>Yersinia</taxon>
    </lineage>
</organism>
<reference key="1">
    <citation type="journal article" date="2007" name="PLoS Genet.">
        <title>The complete genome sequence of Yersinia pseudotuberculosis IP31758, the causative agent of Far East scarlet-like fever.</title>
        <authorList>
            <person name="Eppinger M."/>
            <person name="Rosovitz M.J."/>
            <person name="Fricke W.F."/>
            <person name="Rasko D.A."/>
            <person name="Kokorina G."/>
            <person name="Fayolle C."/>
            <person name="Lindler L.E."/>
            <person name="Carniel E."/>
            <person name="Ravel J."/>
        </authorList>
    </citation>
    <scope>NUCLEOTIDE SEQUENCE [LARGE SCALE GENOMIC DNA]</scope>
    <source>
        <strain>IP 31758</strain>
    </source>
</reference>
<feature type="chain" id="PRO_1000057405" description="3-deoxy-manno-octulosonate cytidylyltransferase">
    <location>
        <begin position="1"/>
        <end position="250"/>
    </location>
</feature>